<name>KCY_METTH</name>
<sequence>MIITIGGLAGTGTTTVARILSERMGIPCVSAGDVFRQMAAERELDILEFSRIAEENPEIDIEIDRRQARLADEHEDLILEGRLSAHFARADLKVLLIAPFDVRAQRISVRESKDIETVREEIRIRERSEAQRYREIHGIDVDDLEVYDIVINTNRFDAEAS</sequence>
<reference key="1">
    <citation type="journal article" date="1997" name="J. Bacteriol.">
        <title>Complete genome sequence of Methanobacterium thermoautotrophicum deltaH: functional analysis and comparative genomics.</title>
        <authorList>
            <person name="Smith D.R."/>
            <person name="Doucette-Stamm L.A."/>
            <person name="Deloughery C."/>
            <person name="Lee H.-M."/>
            <person name="Dubois J."/>
            <person name="Aldredge T."/>
            <person name="Bashirzadeh R."/>
            <person name="Blakely D."/>
            <person name="Cook R."/>
            <person name="Gilbert K."/>
            <person name="Harrison D."/>
            <person name="Hoang L."/>
            <person name="Keagle P."/>
            <person name="Lumm W."/>
            <person name="Pothier B."/>
            <person name="Qiu D."/>
            <person name="Spadafora R."/>
            <person name="Vicare R."/>
            <person name="Wang Y."/>
            <person name="Wierzbowski J."/>
            <person name="Gibson R."/>
            <person name="Jiwani N."/>
            <person name="Caruso A."/>
            <person name="Bush D."/>
            <person name="Safer H."/>
            <person name="Patwell D."/>
            <person name="Prabhakar S."/>
            <person name="McDougall S."/>
            <person name="Shimer G."/>
            <person name="Goyal A."/>
            <person name="Pietrovski S."/>
            <person name="Church G.M."/>
            <person name="Daniels C.J."/>
            <person name="Mao J.-I."/>
            <person name="Rice P."/>
            <person name="Noelling J."/>
            <person name="Reeve J.N."/>
        </authorList>
    </citation>
    <scope>NUCLEOTIDE SEQUENCE [LARGE SCALE GENOMIC DNA]</scope>
    <source>
        <strain>ATCC 29096 / DSM 1053 / JCM 10044 / NBRC 100330 / Delta H</strain>
    </source>
</reference>
<protein>
    <recommendedName>
        <fullName>Cytidylate kinase</fullName>
        <shortName>CK</shortName>
        <ecNumber>2.7.4.25</ecNumber>
    </recommendedName>
    <alternativeName>
        <fullName>Cytidine monophosphate kinase</fullName>
        <shortName>CMP kinase</shortName>
    </alternativeName>
</protein>
<proteinExistence type="inferred from homology"/>
<accession>O26138</accession>
<organism>
    <name type="scientific">Methanothermobacter thermautotrophicus (strain ATCC 29096 / DSM 1053 / JCM 10044 / NBRC 100330 / Delta H)</name>
    <name type="common">Methanobacterium thermoautotrophicum</name>
    <dbReference type="NCBI Taxonomy" id="187420"/>
    <lineage>
        <taxon>Archaea</taxon>
        <taxon>Methanobacteriati</taxon>
        <taxon>Methanobacteriota</taxon>
        <taxon>Methanomada group</taxon>
        <taxon>Methanobacteria</taxon>
        <taxon>Methanobacteriales</taxon>
        <taxon>Methanobacteriaceae</taxon>
        <taxon>Methanothermobacter</taxon>
    </lineage>
</organism>
<evidence type="ECO:0000250" key="1"/>
<evidence type="ECO:0000305" key="2"/>
<keyword id="KW-0067">ATP-binding</keyword>
<keyword id="KW-0963">Cytoplasm</keyword>
<keyword id="KW-0418">Kinase</keyword>
<keyword id="KW-0547">Nucleotide-binding</keyword>
<keyword id="KW-1185">Reference proteome</keyword>
<keyword id="KW-0808">Transferase</keyword>
<comment type="catalytic activity">
    <reaction>
        <text>CMP + ATP = CDP + ADP</text>
        <dbReference type="Rhea" id="RHEA:11600"/>
        <dbReference type="ChEBI" id="CHEBI:30616"/>
        <dbReference type="ChEBI" id="CHEBI:58069"/>
        <dbReference type="ChEBI" id="CHEBI:60377"/>
        <dbReference type="ChEBI" id="CHEBI:456216"/>
        <dbReference type="EC" id="2.7.4.25"/>
    </reaction>
</comment>
<comment type="catalytic activity">
    <reaction>
        <text>dCMP + ATP = dCDP + ADP</text>
        <dbReference type="Rhea" id="RHEA:25094"/>
        <dbReference type="ChEBI" id="CHEBI:30616"/>
        <dbReference type="ChEBI" id="CHEBI:57566"/>
        <dbReference type="ChEBI" id="CHEBI:58593"/>
        <dbReference type="ChEBI" id="CHEBI:456216"/>
        <dbReference type="EC" id="2.7.4.25"/>
    </reaction>
</comment>
<comment type="subcellular location">
    <subcellularLocation>
        <location evidence="1">Cytoplasm</location>
    </subcellularLocation>
</comment>
<comment type="similarity">
    <text evidence="2">Belongs to the cytidylate kinase family. Type 2 subfamily.</text>
</comment>
<dbReference type="EC" id="2.7.4.25"/>
<dbReference type="EMBL" id="AE000666">
    <property type="protein sequence ID" value="AAB84539.1"/>
    <property type="molecule type" value="Genomic_DNA"/>
</dbReference>
<dbReference type="PIR" id="C69138">
    <property type="entry name" value="C69138"/>
</dbReference>
<dbReference type="SMR" id="O26138"/>
<dbReference type="FunCoup" id="O26138">
    <property type="interactions" value="22"/>
</dbReference>
<dbReference type="STRING" id="187420.MTH_30"/>
<dbReference type="PaxDb" id="187420-MTH_30"/>
<dbReference type="EnsemblBacteria" id="AAB84539">
    <property type="protein sequence ID" value="AAB84539"/>
    <property type="gene ID" value="MTH_30"/>
</dbReference>
<dbReference type="KEGG" id="mth:MTH_30"/>
<dbReference type="PATRIC" id="fig|187420.15.peg.30"/>
<dbReference type="HOGENOM" id="CLU_079959_1_0_2"/>
<dbReference type="InParanoid" id="O26138"/>
<dbReference type="Proteomes" id="UP000005223">
    <property type="component" value="Chromosome"/>
</dbReference>
<dbReference type="GO" id="GO:0005737">
    <property type="term" value="C:cytoplasm"/>
    <property type="evidence" value="ECO:0007669"/>
    <property type="project" value="UniProtKB-SubCell"/>
</dbReference>
<dbReference type="GO" id="GO:0005524">
    <property type="term" value="F:ATP binding"/>
    <property type="evidence" value="ECO:0007669"/>
    <property type="project" value="UniProtKB-UniRule"/>
</dbReference>
<dbReference type="GO" id="GO:0036430">
    <property type="term" value="F:CMP kinase activity"/>
    <property type="evidence" value="ECO:0007669"/>
    <property type="project" value="RHEA"/>
</dbReference>
<dbReference type="GO" id="GO:0036431">
    <property type="term" value="F:dCMP kinase activity"/>
    <property type="evidence" value="ECO:0007669"/>
    <property type="project" value="RHEA"/>
</dbReference>
<dbReference type="GO" id="GO:0006220">
    <property type="term" value="P:pyrimidine nucleotide metabolic process"/>
    <property type="evidence" value="ECO:0007669"/>
    <property type="project" value="UniProtKB-UniRule"/>
</dbReference>
<dbReference type="CDD" id="cd02020">
    <property type="entry name" value="CMPK"/>
    <property type="match status" value="1"/>
</dbReference>
<dbReference type="Gene3D" id="3.40.50.300">
    <property type="entry name" value="P-loop containing nucleotide triphosphate hydrolases"/>
    <property type="match status" value="1"/>
</dbReference>
<dbReference type="HAMAP" id="MF_00239">
    <property type="entry name" value="Cytidyl_kinase_type2"/>
    <property type="match status" value="1"/>
</dbReference>
<dbReference type="InterPro" id="IPR011892">
    <property type="entry name" value="Cyt_kin_arch"/>
</dbReference>
<dbReference type="InterPro" id="IPR011994">
    <property type="entry name" value="Cytidylate_kinase_dom"/>
</dbReference>
<dbReference type="InterPro" id="IPR027417">
    <property type="entry name" value="P-loop_NTPase"/>
</dbReference>
<dbReference type="NCBIfam" id="TIGR02173">
    <property type="entry name" value="cyt_kin_arch"/>
    <property type="match status" value="1"/>
</dbReference>
<dbReference type="Pfam" id="PF13189">
    <property type="entry name" value="Cytidylate_kin2"/>
    <property type="match status" value="1"/>
</dbReference>
<dbReference type="SUPFAM" id="SSF52540">
    <property type="entry name" value="P-loop containing nucleoside triphosphate hydrolases"/>
    <property type="match status" value="1"/>
</dbReference>
<feature type="chain" id="PRO_0000132017" description="Cytidylate kinase">
    <location>
        <begin position="1"/>
        <end position="161"/>
    </location>
</feature>
<feature type="binding site" evidence="1">
    <location>
        <begin position="7"/>
        <end position="15"/>
    </location>
    <ligand>
        <name>ATP</name>
        <dbReference type="ChEBI" id="CHEBI:30616"/>
    </ligand>
</feature>
<gene>
    <name type="primary">cmk</name>
    <name type="ordered locus">MTH_30</name>
</gene>